<comment type="function">
    <text evidence="1">Involved in the synthesis of the GDP-mannose and dolichol-phosphate-mannose required for a number of critical mannosyl transfer reactions.</text>
</comment>
<comment type="catalytic activity">
    <reaction>
        <text>alpha-D-mannose 1-phosphate = D-mannose 6-phosphate</text>
        <dbReference type="Rhea" id="RHEA:11140"/>
        <dbReference type="ChEBI" id="CHEBI:58409"/>
        <dbReference type="ChEBI" id="CHEBI:58735"/>
        <dbReference type="EC" id="5.4.2.8"/>
    </reaction>
</comment>
<comment type="pathway">
    <text>Nucleotide-sugar biosynthesis; GDP-alpha-D-mannose biosynthesis; alpha-D-mannose 1-phosphate from D-fructose 6-phosphate: step 2/2.</text>
</comment>
<comment type="subunit">
    <text evidence="1">Homodimer.</text>
</comment>
<comment type="subcellular location">
    <subcellularLocation>
        <location evidence="1">Cytoplasm</location>
    </subcellularLocation>
</comment>
<comment type="similarity">
    <text evidence="4">Belongs to the eukaryotic PMM family.</text>
</comment>
<feature type="chain" id="PRO_0000199696" description="Phosphomannomutase 2">
    <location>
        <begin position="1"/>
        <end position="242"/>
    </location>
</feature>
<feature type="active site" description="Nucleophile" evidence="3">
    <location>
        <position position="8"/>
    </location>
</feature>
<feature type="active site" description="Proton donor/acceptor" evidence="3">
    <location>
        <position position="10"/>
    </location>
</feature>
<feature type="binding site" evidence="3">
    <location>
        <position position="8"/>
    </location>
    <ligand>
        <name>Mg(2+)</name>
        <dbReference type="ChEBI" id="CHEBI:18420"/>
        <label>1</label>
    </ligand>
</feature>
<feature type="binding site" evidence="3">
    <location>
        <position position="10"/>
    </location>
    <ligand>
        <name>Mg(2+)</name>
        <dbReference type="ChEBI" id="CHEBI:18420"/>
        <label>1</label>
    </ligand>
</feature>
<feature type="binding site" evidence="3">
    <location>
        <position position="17"/>
    </location>
    <ligand>
        <name>alpha-D-mannose 1-phosphate</name>
        <dbReference type="ChEBI" id="CHEBI:58409"/>
    </ligand>
</feature>
<feature type="binding site" evidence="3">
    <location>
        <position position="119"/>
    </location>
    <ligand>
        <name>alpha-D-mannose 1-phosphate</name>
        <dbReference type="ChEBI" id="CHEBI:58409"/>
    </ligand>
</feature>
<feature type="binding site" evidence="3">
    <location>
        <position position="130"/>
    </location>
    <ligand>
        <name>alpha-D-mannose 1-phosphate</name>
        <dbReference type="ChEBI" id="CHEBI:58409"/>
    </ligand>
</feature>
<feature type="binding site" evidence="3">
    <location>
        <position position="137"/>
    </location>
    <ligand>
        <name>alpha-D-mannose 1-phosphate</name>
        <dbReference type="ChEBI" id="CHEBI:58409"/>
    </ligand>
</feature>
<feature type="binding site" evidence="3">
    <location>
        <position position="175"/>
    </location>
    <ligand>
        <name>alpha-D-mannose 1-phosphate</name>
        <dbReference type="ChEBI" id="CHEBI:58409"/>
    </ligand>
</feature>
<feature type="binding site" evidence="3">
    <location>
        <position position="177"/>
    </location>
    <ligand>
        <name>alpha-D-mannose 1-phosphate</name>
        <dbReference type="ChEBI" id="CHEBI:58409"/>
    </ligand>
</feature>
<feature type="binding site" evidence="2">
    <location>
        <position position="205"/>
    </location>
    <ligand>
        <name>Mg(2+)</name>
        <dbReference type="ChEBI" id="CHEBI:18420"/>
        <label>1</label>
    </ligand>
</feature>
<feature type="binding site" evidence="3">
    <location>
        <position position="217"/>
    </location>
    <ligand>
        <name>Mg(2+)</name>
        <dbReference type="ChEBI" id="CHEBI:18420"/>
        <label>2</label>
    </ligand>
</feature>
<feature type="binding site" evidence="3">
    <location>
        <position position="219"/>
    </location>
    <ligand>
        <name>Mg(2+)</name>
        <dbReference type="ChEBI" id="CHEBI:18420"/>
        <label>2</label>
    </ligand>
</feature>
<feature type="binding site" evidence="3">
    <location>
        <position position="222"/>
    </location>
    <ligand>
        <name>Mg(2+)</name>
        <dbReference type="ChEBI" id="CHEBI:18420"/>
        <label>2</label>
    </ligand>
</feature>
<feature type="modified residue" description="N6-acetyllysine" evidence="5">
    <location>
        <position position="145"/>
    </location>
</feature>
<evidence type="ECO:0000250" key="1"/>
<evidence type="ECO:0000250" key="2">
    <source>
        <dbReference type="UniProtKB" id="P31353"/>
    </source>
</evidence>
<evidence type="ECO:0000250" key="3">
    <source>
        <dbReference type="UniProtKB" id="Q92871"/>
    </source>
</evidence>
<evidence type="ECO:0000305" key="4"/>
<evidence type="ECO:0007744" key="5">
    <source>
    </source>
</evidence>
<reference key="1">
    <citation type="journal article" date="2001" name="Gene">
        <title>Identification and localization of two mouse phosphomannomutase genes, Pmm1 and Pmm2.</title>
        <authorList>
            <person name="Heykants L."/>
            <person name="Schollen E."/>
            <person name="Grunewald S."/>
            <person name="Matthijs G."/>
        </authorList>
    </citation>
    <scope>NUCLEOTIDE SEQUENCE [MRNA]</scope>
    <source>
        <strain>C57BL/6J</strain>
    </source>
</reference>
<reference key="2">
    <citation type="journal article" date="2004" name="Genome Res.">
        <title>The status, quality, and expansion of the NIH full-length cDNA project: the Mammalian Gene Collection (MGC).</title>
        <authorList>
            <consortium name="The MGC Project Team"/>
        </authorList>
    </citation>
    <scope>NUCLEOTIDE SEQUENCE [LARGE SCALE MRNA]</scope>
    <source>
        <strain>FVB/N</strain>
        <tissue>Colon</tissue>
    </source>
</reference>
<reference key="3">
    <citation type="journal article" date="2010" name="Cell">
        <title>A tissue-specific atlas of mouse protein phosphorylation and expression.</title>
        <authorList>
            <person name="Huttlin E.L."/>
            <person name="Jedrychowski M.P."/>
            <person name="Elias J.E."/>
            <person name="Goswami T."/>
            <person name="Rad R."/>
            <person name="Beausoleil S.A."/>
            <person name="Villen J."/>
            <person name="Haas W."/>
            <person name="Sowa M.E."/>
            <person name="Gygi S.P."/>
        </authorList>
    </citation>
    <scope>IDENTIFICATION BY MASS SPECTROMETRY [LARGE SCALE ANALYSIS]</scope>
    <source>
        <tissue>Brain</tissue>
        <tissue>Brown adipose tissue</tissue>
        <tissue>Heart</tissue>
        <tissue>Kidney</tissue>
        <tissue>Liver</tissue>
        <tissue>Lung</tissue>
        <tissue>Pancreas</tissue>
        <tissue>Spleen</tissue>
        <tissue>Testis</tissue>
    </source>
</reference>
<reference key="4">
    <citation type="journal article" date="2013" name="Mol. Cell">
        <title>SIRT5-mediated lysine desuccinylation impacts diverse metabolic pathways.</title>
        <authorList>
            <person name="Park J."/>
            <person name="Chen Y."/>
            <person name="Tishkoff D.X."/>
            <person name="Peng C."/>
            <person name="Tan M."/>
            <person name="Dai L."/>
            <person name="Xie Z."/>
            <person name="Zhang Y."/>
            <person name="Zwaans B.M."/>
            <person name="Skinner M.E."/>
            <person name="Lombard D.B."/>
            <person name="Zhao Y."/>
        </authorList>
    </citation>
    <scope>ACETYLATION [LARGE SCALE ANALYSIS] AT LYS-145</scope>
    <scope>IDENTIFICATION BY MASS SPECTROMETRY [LARGE SCALE ANALYSIS]</scope>
    <source>
        <tissue>Embryonic fibroblast</tissue>
    </source>
</reference>
<sequence length="242" mass="27657">MATLCLFDMDGTLTAPRQKITEEMDGFLQKLRQKTKIGVVGGSDFEKLQEQLGNDVVEKYDYVFPENGLVAYKDGKLLCKQNIQGHLGEDVIQDLINYCLSYIANIKLPKKRGTFIEFRNGMLNVSPIGRSCSQEERIEFYELDKKEHIRQKFVADLRKEFAGKGLTFSIGGQISIDVFPEGWDKRYCLRHLEHAGYKTIYFFGDKTMPGGNDHEIFTDPRTVGYTVTAPEDTRRICEGLFP</sequence>
<dbReference type="EC" id="5.4.2.8"/>
<dbReference type="EMBL" id="AF043514">
    <property type="protein sequence ID" value="AAD02276.1"/>
    <property type="molecule type" value="mRNA"/>
</dbReference>
<dbReference type="EMBL" id="BC046325">
    <property type="protein sequence ID" value="AAH46325.1"/>
    <property type="molecule type" value="mRNA"/>
</dbReference>
<dbReference type="CCDS" id="CCDS27941.1"/>
<dbReference type="RefSeq" id="NP_058577.1">
    <property type="nucleotide sequence ID" value="NM_016881.3"/>
</dbReference>
<dbReference type="SMR" id="Q9Z2M7"/>
<dbReference type="BioGRID" id="207568">
    <property type="interactions" value="1"/>
</dbReference>
<dbReference type="FunCoup" id="Q9Z2M7">
    <property type="interactions" value="2266"/>
</dbReference>
<dbReference type="STRING" id="10090.ENSMUSP00000023396"/>
<dbReference type="iPTMnet" id="Q9Z2M7"/>
<dbReference type="PhosphoSitePlus" id="Q9Z2M7"/>
<dbReference type="REPRODUCTION-2DPAGE" id="Q9Z2M7"/>
<dbReference type="jPOST" id="Q9Z2M7"/>
<dbReference type="PaxDb" id="10090-ENSMUSP00000023396"/>
<dbReference type="ProteomicsDB" id="289552"/>
<dbReference type="Pumba" id="Q9Z2M7"/>
<dbReference type="Antibodypedia" id="24552">
    <property type="antibodies" value="219 antibodies from 30 providers"/>
</dbReference>
<dbReference type="DNASU" id="54128"/>
<dbReference type="Ensembl" id="ENSMUST00000023396.10">
    <property type="protein sequence ID" value="ENSMUSP00000023396.10"/>
    <property type="gene ID" value="ENSMUSG00000022711.17"/>
</dbReference>
<dbReference type="Ensembl" id="ENSMUST00000230828.2">
    <property type="protein sequence ID" value="ENSMUSP00000155554.2"/>
    <property type="gene ID" value="ENSMUSG00000022711.17"/>
</dbReference>
<dbReference type="GeneID" id="54128"/>
<dbReference type="KEGG" id="mmu:54128"/>
<dbReference type="UCSC" id="uc007ycr.1">
    <property type="organism name" value="mouse"/>
</dbReference>
<dbReference type="AGR" id="MGI:1859214"/>
<dbReference type="CTD" id="5373"/>
<dbReference type="MGI" id="MGI:1859214">
    <property type="gene designation" value="Pmm2"/>
</dbReference>
<dbReference type="VEuPathDB" id="HostDB:ENSMUSG00000022711"/>
<dbReference type="eggNOG" id="KOG3189">
    <property type="taxonomic scope" value="Eukaryota"/>
</dbReference>
<dbReference type="GeneTree" id="ENSGT00390000002918"/>
<dbReference type="HOGENOM" id="CLU_065642_0_0_1"/>
<dbReference type="InParanoid" id="Q9Z2M7"/>
<dbReference type="OMA" id="ISHRVYT"/>
<dbReference type="OrthoDB" id="10264771at2759"/>
<dbReference type="PhylomeDB" id="Q9Z2M7"/>
<dbReference type="TreeFam" id="TF300874"/>
<dbReference type="Reactome" id="R-MMU-446205">
    <property type="pathway name" value="Synthesis of GDP-mannose"/>
</dbReference>
<dbReference type="UniPathway" id="UPA00126">
    <property type="reaction ID" value="UER00424"/>
</dbReference>
<dbReference type="BioGRID-ORCS" id="54128">
    <property type="hits" value="12 hits in 79 CRISPR screens"/>
</dbReference>
<dbReference type="ChiTaRS" id="Pmm2">
    <property type="organism name" value="mouse"/>
</dbReference>
<dbReference type="PRO" id="PR:Q9Z2M7"/>
<dbReference type="Proteomes" id="UP000000589">
    <property type="component" value="Chromosome 16"/>
</dbReference>
<dbReference type="RNAct" id="Q9Z2M7">
    <property type="molecule type" value="protein"/>
</dbReference>
<dbReference type="Bgee" id="ENSMUSG00000022711">
    <property type="expression patterns" value="Expressed in seminal vesicle and 262 other cell types or tissues"/>
</dbReference>
<dbReference type="ExpressionAtlas" id="Q9Z2M7">
    <property type="expression patterns" value="baseline and differential"/>
</dbReference>
<dbReference type="GO" id="GO:0005929">
    <property type="term" value="C:cilium"/>
    <property type="evidence" value="ECO:0007669"/>
    <property type="project" value="Ensembl"/>
</dbReference>
<dbReference type="GO" id="GO:0005737">
    <property type="term" value="C:cytoplasm"/>
    <property type="evidence" value="ECO:0000314"/>
    <property type="project" value="MGI"/>
</dbReference>
<dbReference type="GO" id="GO:0005829">
    <property type="term" value="C:cytosol"/>
    <property type="evidence" value="ECO:0000314"/>
    <property type="project" value="MGI"/>
</dbReference>
<dbReference type="GO" id="GO:0015630">
    <property type="term" value="C:microtubule cytoskeleton"/>
    <property type="evidence" value="ECO:0007669"/>
    <property type="project" value="Ensembl"/>
</dbReference>
<dbReference type="GO" id="GO:0043025">
    <property type="term" value="C:neuronal cell body"/>
    <property type="evidence" value="ECO:0000314"/>
    <property type="project" value="MGI"/>
</dbReference>
<dbReference type="GO" id="GO:0005654">
    <property type="term" value="C:nucleoplasm"/>
    <property type="evidence" value="ECO:0007669"/>
    <property type="project" value="Ensembl"/>
</dbReference>
<dbReference type="GO" id="GO:0046872">
    <property type="term" value="F:metal ion binding"/>
    <property type="evidence" value="ECO:0007669"/>
    <property type="project" value="UniProtKB-KW"/>
</dbReference>
<dbReference type="GO" id="GO:0004615">
    <property type="term" value="F:phosphomannomutase activity"/>
    <property type="evidence" value="ECO:0000315"/>
    <property type="project" value="MGI"/>
</dbReference>
<dbReference type="GO" id="GO:0061729">
    <property type="term" value="P:GDP-D-mannose biosynthetic process from fructose-6-phosphate"/>
    <property type="evidence" value="ECO:0007669"/>
    <property type="project" value="Ensembl"/>
</dbReference>
<dbReference type="GO" id="GO:0009298">
    <property type="term" value="P:GDP-mannose biosynthetic process"/>
    <property type="evidence" value="ECO:0000315"/>
    <property type="project" value="MGI"/>
</dbReference>
<dbReference type="GO" id="GO:0061728">
    <property type="term" value="P:GDP-mannose biosynthetic process from mannose"/>
    <property type="evidence" value="ECO:0000315"/>
    <property type="project" value="MGI"/>
</dbReference>
<dbReference type="CDD" id="cd02585">
    <property type="entry name" value="HAD_PMM"/>
    <property type="match status" value="1"/>
</dbReference>
<dbReference type="FunFam" id="3.30.1240.20:FF:000001">
    <property type="entry name" value="Phosphomannomutase"/>
    <property type="match status" value="1"/>
</dbReference>
<dbReference type="FunFam" id="3.40.50.1000:FF:000216">
    <property type="entry name" value="Phosphomannomutase"/>
    <property type="match status" value="2"/>
</dbReference>
<dbReference type="Gene3D" id="3.30.1240.20">
    <property type="match status" value="1"/>
</dbReference>
<dbReference type="Gene3D" id="3.40.50.1000">
    <property type="entry name" value="HAD superfamily/HAD-like"/>
    <property type="match status" value="1"/>
</dbReference>
<dbReference type="InterPro" id="IPR036412">
    <property type="entry name" value="HAD-like_sf"/>
</dbReference>
<dbReference type="InterPro" id="IPR006379">
    <property type="entry name" value="HAD-SF_hydro_IIB"/>
</dbReference>
<dbReference type="InterPro" id="IPR023214">
    <property type="entry name" value="HAD_sf"/>
</dbReference>
<dbReference type="InterPro" id="IPR005002">
    <property type="entry name" value="PMM"/>
</dbReference>
<dbReference type="InterPro" id="IPR043169">
    <property type="entry name" value="PMM_cap"/>
</dbReference>
<dbReference type="NCBIfam" id="TIGR01484">
    <property type="entry name" value="HAD-SF-IIB"/>
    <property type="match status" value="1"/>
</dbReference>
<dbReference type="PANTHER" id="PTHR10466">
    <property type="entry name" value="PHOSPHOMANNOMUTASE"/>
    <property type="match status" value="1"/>
</dbReference>
<dbReference type="PANTHER" id="PTHR10466:SF2">
    <property type="entry name" value="PHOSPHOMANNOMUTASE 2"/>
    <property type="match status" value="1"/>
</dbReference>
<dbReference type="Pfam" id="PF03332">
    <property type="entry name" value="PMM"/>
    <property type="match status" value="1"/>
</dbReference>
<dbReference type="SFLD" id="SFLDF00445">
    <property type="entry name" value="alpha-phosphomannomutase"/>
    <property type="match status" value="1"/>
</dbReference>
<dbReference type="SFLD" id="SFLDG01140">
    <property type="entry name" value="C2.B:_Phosphomannomutase_and_P"/>
    <property type="match status" value="1"/>
</dbReference>
<dbReference type="SUPFAM" id="SSF56784">
    <property type="entry name" value="HAD-like"/>
    <property type="match status" value="1"/>
</dbReference>
<gene>
    <name type="primary">Pmm2</name>
</gene>
<keyword id="KW-0007">Acetylation</keyword>
<keyword id="KW-0963">Cytoplasm</keyword>
<keyword id="KW-0413">Isomerase</keyword>
<keyword id="KW-0460">Magnesium</keyword>
<keyword id="KW-0479">Metal-binding</keyword>
<keyword id="KW-1185">Reference proteome</keyword>
<proteinExistence type="evidence at protein level"/>
<name>PMM2_MOUSE</name>
<accession>Q9Z2M7</accession>
<protein>
    <recommendedName>
        <fullName>Phosphomannomutase 2</fullName>
        <shortName>PMM 2</shortName>
        <ecNumber>5.4.2.8</ecNumber>
    </recommendedName>
</protein>
<organism>
    <name type="scientific">Mus musculus</name>
    <name type="common">Mouse</name>
    <dbReference type="NCBI Taxonomy" id="10090"/>
    <lineage>
        <taxon>Eukaryota</taxon>
        <taxon>Metazoa</taxon>
        <taxon>Chordata</taxon>
        <taxon>Craniata</taxon>
        <taxon>Vertebrata</taxon>
        <taxon>Euteleostomi</taxon>
        <taxon>Mammalia</taxon>
        <taxon>Eutheria</taxon>
        <taxon>Euarchontoglires</taxon>
        <taxon>Glires</taxon>
        <taxon>Rodentia</taxon>
        <taxon>Myomorpha</taxon>
        <taxon>Muroidea</taxon>
        <taxon>Muridae</taxon>
        <taxon>Murinae</taxon>
        <taxon>Mus</taxon>
        <taxon>Mus</taxon>
    </lineage>
</organism>